<reference key="1">
    <citation type="journal article" date="2007" name="J. Mol. Evol.">
        <title>Revisiting the molecular evolutionary history of Shigella spp.</title>
        <authorList>
            <person name="Yang J."/>
            <person name="Nie H."/>
            <person name="Chen L."/>
            <person name="Zhang X."/>
            <person name="Yang F."/>
            <person name="Xu X."/>
            <person name="Zhu Y."/>
            <person name="Yu J."/>
            <person name="Jin Q."/>
        </authorList>
    </citation>
    <scope>NUCLEOTIDE SEQUENCE [GENOMIC DNA]</scope>
    <source>
        <strain>G1190 / Serotype 4</strain>
        <strain>G1192 / Serotype 6</strain>
        <strain>G1213 / Serotype 5</strain>
        <strain>G1222 / Serotype 7</strain>
        <strain>G1246 / Serotype 11</strain>
        <strain>G1252 / Serotype 2</strain>
        <strain>G1263 / Serotype 12</strain>
        <strain>G1271 / Serotype 13</strain>
        <strain>G1274 / Serotype 9</strain>
        <strain>G1281 / Serotype 3</strain>
        <plasmid>pSd11_G1246</plasmid>
        <plasmid>pSd12_G1263</plasmid>
        <plasmid>pSd13_G1271</plasmid>
        <plasmid>pSd2_G1252</plasmid>
        <plasmid>pSd3_G1281</plasmid>
        <plasmid>pSd4_G1190</plasmid>
        <plasmid>pSd5_G1213</plasmid>
        <plasmid>pSd6_G1192</plasmid>
        <plasmid>pSd7_G1222</plasmid>
        <plasmid>pSd9_G1274</plasmid>
    </source>
</reference>
<name>OSPF_SHIDY</name>
<comment type="function">
    <text evidence="1">Catalyzes the removal of the phosphate group from the phosphothreonine in the mitogen-activated protein kinases such as MAPK2/ERK2, MAPK3/ERK1, MAPK8 and MAPK14 in an irreversible reaction, thus preventing the downstream phosphorylation of histone H3. This epigenetic modification results in inhibition of the transcription of a specific subset of pro-inflammatory genes, and ultimately to a reduced immune response against the invading pathogen. The diminished immune response enhances the bacterium's ability to disseminate and multiply within the host (By similarity).</text>
</comment>
<comment type="subcellular location">
    <subcellularLocation>
        <location>Secreted</location>
    </subcellularLocation>
    <text evidence="1">Secreted via the type III secretion system (T3SS). Localizes in the nucleus of the infected cell (By similarity).</text>
</comment>
<comment type="similarity">
    <text evidence="2">Belongs to the phosphothreonine lyase family.</text>
</comment>
<protein>
    <recommendedName>
        <fullName>Phosphothreonine lyase OspF</fullName>
        <ecNumber>4.2.3.-</ecNumber>
    </recommendedName>
    <alternativeName>
        <fullName>Effector protein OspF</fullName>
    </alternativeName>
</protein>
<feature type="chain" id="PRO_0000299353" description="Phosphothreonine lyase OspF">
    <location>
        <begin position="1" status="less than"/>
        <end position="170" status="greater than"/>
    </location>
</feature>
<feature type="active site" description="Proton donor" evidence="1">
    <location>
        <position position="82"/>
    </location>
</feature>
<feature type="active site" description="Proton acceptor" evidence="1">
    <location>
        <position position="112"/>
    </location>
</feature>
<feature type="non-terminal residue">
    <location>
        <position position="1"/>
    </location>
</feature>
<feature type="non-terminal residue">
    <location>
        <position position="170"/>
    </location>
</feature>
<evidence type="ECO:0000250" key="1"/>
<evidence type="ECO:0000305" key="2"/>
<keyword id="KW-0456">Lyase</keyword>
<keyword id="KW-0614">Plasmid</keyword>
<keyword id="KW-0964">Secreted</keyword>
<keyword id="KW-0843">Virulence</keyword>
<gene>
    <name type="primary">ospF</name>
</gene>
<accession>Q2ET08</accession>
<sequence>PQMLSANERLKNNFNILYNQIRQYPAYYFKVASNVPTYSDICQFFSVMYQGFQIVNHSGDVFIHACRENPQSKGDFVGDKFHISIAREQVPLAFQILSGLLFSEDSPIDKWKITDMNRVSQQSRVGIGAQFTLYVKSDQECSQYSALLLHKIRQFIMCLESNLLRSKIAP</sequence>
<organism>
    <name type="scientific">Shigella dysenteriae</name>
    <dbReference type="NCBI Taxonomy" id="622"/>
    <lineage>
        <taxon>Bacteria</taxon>
        <taxon>Pseudomonadati</taxon>
        <taxon>Pseudomonadota</taxon>
        <taxon>Gammaproteobacteria</taxon>
        <taxon>Enterobacterales</taxon>
        <taxon>Enterobacteriaceae</taxon>
        <taxon>Shigella</taxon>
    </lineage>
</organism>
<proteinExistence type="inferred from homology"/>
<geneLocation type="plasmid">
    <name>pSd9_G1274</name>
</geneLocation>
<geneLocation type="plasmid">
    <name>pSd11_G1246</name>
</geneLocation>
<geneLocation type="plasmid">
    <name>pSd12_G1263</name>
</geneLocation>
<geneLocation type="plasmid">
    <name>pSd13_G1271</name>
</geneLocation>
<geneLocation type="plasmid">
    <name>pSd2_G1252</name>
</geneLocation>
<geneLocation type="plasmid">
    <name>pSd3_G1281</name>
</geneLocation>
<geneLocation type="plasmid">
    <name>pSd4_G1190</name>
</geneLocation>
<geneLocation type="plasmid">
    <name>pSd5_G1213</name>
</geneLocation>
<geneLocation type="plasmid">
    <name>pSd6_G1192</name>
</geneLocation>
<geneLocation type="plasmid">
    <name>pSd7_G1222</name>
</geneLocation>
<dbReference type="EC" id="4.2.3.-"/>
<dbReference type="EMBL" id="DQ362871">
    <property type="protein sequence ID" value="ABD37278.1"/>
    <property type="molecule type" value="Genomic_DNA"/>
</dbReference>
<dbReference type="EMBL" id="DQ362872">
    <property type="protein sequence ID" value="ABD37279.1"/>
    <property type="molecule type" value="Genomic_DNA"/>
</dbReference>
<dbReference type="EMBL" id="DQ362873">
    <property type="protein sequence ID" value="ABD37280.1"/>
    <property type="molecule type" value="Genomic_DNA"/>
</dbReference>
<dbReference type="EMBL" id="DQ362874">
    <property type="protein sequence ID" value="ABD37281.1"/>
    <property type="molecule type" value="Genomic_DNA"/>
</dbReference>
<dbReference type="EMBL" id="DQ362875">
    <property type="protein sequence ID" value="ABD37282.1"/>
    <property type="molecule type" value="Genomic_DNA"/>
</dbReference>
<dbReference type="EMBL" id="DQ362876">
    <property type="protein sequence ID" value="ABD37283.1"/>
    <property type="molecule type" value="Genomic_DNA"/>
</dbReference>
<dbReference type="EMBL" id="DQ362877">
    <property type="protein sequence ID" value="ABD37284.1"/>
    <property type="molecule type" value="Genomic_DNA"/>
</dbReference>
<dbReference type="EMBL" id="DQ362878">
    <property type="protein sequence ID" value="ABD37285.1"/>
    <property type="molecule type" value="Genomic_DNA"/>
</dbReference>
<dbReference type="EMBL" id="DQ362879">
    <property type="protein sequence ID" value="ABD37286.1"/>
    <property type="molecule type" value="Genomic_DNA"/>
</dbReference>
<dbReference type="EMBL" id="DQ362880">
    <property type="protein sequence ID" value="ABD37287.1"/>
    <property type="molecule type" value="Genomic_DNA"/>
</dbReference>
<dbReference type="SMR" id="Q2ET08"/>
<dbReference type="GO" id="GO:0005576">
    <property type="term" value="C:extracellular region"/>
    <property type="evidence" value="ECO:0007669"/>
    <property type="project" value="UniProtKB-SubCell"/>
</dbReference>
<dbReference type="GO" id="GO:0016829">
    <property type="term" value="F:lyase activity"/>
    <property type="evidence" value="ECO:0007669"/>
    <property type="project" value="UniProtKB-KW"/>
</dbReference>
<dbReference type="Gene3D" id="3.30.2430.10">
    <property type="entry name" value="phosphothreonine lyase"/>
    <property type="match status" value="1"/>
</dbReference>
<dbReference type="InterPro" id="IPR003519">
    <property type="entry name" value="OspF/SpvC"/>
</dbReference>
<dbReference type="InterPro" id="IPR038498">
    <property type="entry name" value="OspF/SpvC_sf"/>
</dbReference>
<dbReference type="NCBIfam" id="NF011781">
    <property type="entry name" value="PRK15245.1"/>
    <property type="match status" value="1"/>
</dbReference>
<dbReference type="Pfam" id="PF03536">
    <property type="entry name" value="VRP3"/>
    <property type="match status" value="1"/>
</dbReference>
<dbReference type="PRINTS" id="PR01342">
    <property type="entry name" value="SALVRPPROT"/>
</dbReference>